<feature type="signal peptide" evidence="1">
    <location>
        <begin position="1"/>
        <end position="24"/>
    </location>
</feature>
<feature type="chain" id="PRO_0000302142" description="Serine protease inhibitor Kazal-type 11">
    <location>
        <begin position="25"/>
        <end position="88"/>
    </location>
</feature>
<feature type="domain" description="Kazal-like" evidence="2">
    <location>
        <begin position="32"/>
        <end position="87"/>
    </location>
</feature>
<feature type="site" description="Reactive bond" evidence="2">
    <location>
        <begin position="49"/>
        <end position="50"/>
    </location>
</feature>
<feature type="glycosylation site" description="N-linked (GlcNAc...) asparagine" evidence="1">
    <location>
        <position position="37"/>
    </location>
</feature>
<feature type="disulfide bond" evidence="2">
    <location>
        <begin position="38"/>
        <end position="69"/>
    </location>
</feature>
<feature type="disulfide bond" evidence="2">
    <location>
        <begin position="47"/>
        <end position="66"/>
    </location>
</feature>
<feature type="disulfide bond" evidence="2">
    <location>
        <begin position="55"/>
        <end position="85"/>
    </location>
</feature>
<protein>
    <recommendedName>
        <fullName>Serine protease inhibitor Kazal-type 11</fullName>
    </recommendedName>
</protein>
<sequence length="88" mass="10090">MSSTWIKFLFILTLVLLPYFVAESAVASPESLRKVPNCTLYKSESDCSRTLIPVCADNQMTYYNACYFCLEQLVSPIKYKYHGICTKE</sequence>
<organism>
    <name type="scientific">Mus musculus</name>
    <name type="common">Mouse</name>
    <dbReference type="NCBI Taxonomy" id="10090"/>
    <lineage>
        <taxon>Eukaryota</taxon>
        <taxon>Metazoa</taxon>
        <taxon>Chordata</taxon>
        <taxon>Craniata</taxon>
        <taxon>Vertebrata</taxon>
        <taxon>Euteleostomi</taxon>
        <taxon>Mammalia</taxon>
        <taxon>Eutheria</taxon>
        <taxon>Euarchontoglires</taxon>
        <taxon>Glires</taxon>
        <taxon>Rodentia</taxon>
        <taxon>Myomorpha</taxon>
        <taxon>Muroidea</taxon>
        <taxon>Muridae</taxon>
        <taxon>Murinae</taxon>
        <taxon>Mus</taxon>
        <taxon>Mus</taxon>
    </lineage>
</organism>
<dbReference type="EMBL" id="DQ437331">
    <property type="protein sequence ID" value="ABD93326.1"/>
    <property type="status" value="ALT_INIT"/>
    <property type="molecule type" value="mRNA"/>
</dbReference>
<dbReference type="EMBL" id="AK136741">
    <property type="protein sequence ID" value="BAE23116.1"/>
    <property type="molecule type" value="mRNA"/>
</dbReference>
<dbReference type="EMBL" id="BC147524">
    <property type="protein sequence ID" value="AAI47525.1"/>
    <property type="molecule type" value="mRNA"/>
</dbReference>
<dbReference type="EMBL" id="BC147541">
    <property type="protein sequence ID" value="AAI47542.1"/>
    <property type="molecule type" value="mRNA"/>
</dbReference>
<dbReference type="RefSeq" id="NP_001041682.3">
    <property type="nucleotide sequence ID" value="NM_001048217.4"/>
</dbReference>
<dbReference type="SMR" id="Q09TK7"/>
<dbReference type="FunCoup" id="Q09TK7">
    <property type="interactions" value="2"/>
</dbReference>
<dbReference type="STRING" id="10090.ENSMUSP00000095194"/>
<dbReference type="GlyCosmos" id="Q09TK7">
    <property type="glycosylation" value="1 site, No reported glycans"/>
</dbReference>
<dbReference type="GlyGen" id="Q09TK7">
    <property type="glycosylation" value="1 site"/>
</dbReference>
<dbReference type="PaxDb" id="10090-ENSMUSP00000095194"/>
<dbReference type="ProteomicsDB" id="268999"/>
<dbReference type="DNASU" id="433181"/>
<dbReference type="Ensembl" id="ENSMUST00000239421.2">
    <property type="protein sequence ID" value="ENSMUSP00000159307.2"/>
    <property type="gene ID" value="ENSMUSG00000073573.7"/>
</dbReference>
<dbReference type="GeneID" id="433181"/>
<dbReference type="KEGG" id="mmu:433181"/>
<dbReference type="UCSC" id="uc008euu.2">
    <property type="organism name" value="mouse"/>
</dbReference>
<dbReference type="AGR" id="MGI:3588289"/>
<dbReference type="CTD" id="433181"/>
<dbReference type="MGI" id="MGI:3588289">
    <property type="gene designation" value="Spink11"/>
</dbReference>
<dbReference type="VEuPathDB" id="HostDB:ENSMUSG00000073573"/>
<dbReference type="GeneTree" id="ENSGT00940000164814"/>
<dbReference type="InParanoid" id="Q09TK7"/>
<dbReference type="OMA" id="PVCANDR"/>
<dbReference type="OrthoDB" id="328123at2759"/>
<dbReference type="PhylomeDB" id="Q09TK7"/>
<dbReference type="BioGRID-ORCS" id="433181">
    <property type="hits" value="0 hits in 77 CRISPR screens"/>
</dbReference>
<dbReference type="PRO" id="PR:Q09TK7"/>
<dbReference type="Proteomes" id="UP000000589">
    <property type="component" value="Chromosome 18"/>
</dbReference>
<dbReference type="RNAct" id="Q09TK7">
    <property type="molecule type" value="protein"/>
</dbReference>
<dbReference type="Bgee" id="ENSMUSG00000073573">
    <property type="expression patterns" value="Expressed in mesodermal cell in embryo and 5 other cell types or tissues"/>
</dbReference>
<dbReference type="ExpressionAtlas" id="Q09TK7">
    <property type="expression patterns" value="baseline and differential"/>
</dbReference>
<dbReference type="GO" id="GO:0005576">
    <property type="term" value="C:extracellular region"/>
    <property type="evidence" value="ECO:0007669"/>
    <property type="project" value="UniProtKB-SubCell"/>
</dbReference>
<dbReference type="GO" id="GO:0004867">
    <property type="term" value="F:serine-type endopeptidase inhibitor activity"/>
    <property type="evidence" value="ECO:0007669"/>
    <property type="project" value="UniProtKB-KW"/>
</dbReference>
<dbReference type="CDD" id="cd00104">
    <property type="entry name" value="KAZAL_FS"/>
    <property type="match status" value="1"/>
</dbReference>
<dbReference type="Gene3D" id="3.30.60.30">
    <property type="match status" value="1"/>
</dbReference>
<dbReference type="InterPro" id="IPR002350">
    <property type="entry name" value="Kazal_dom"/>
</dbReference>
<dbReference type="InterPro" id="IPR036058">
    <property type="entry name" value="Kazal_dom_sf"/>
</dbReference>
<dbReference type="PANTHER" id="PTHR21312">
    <property type="entry name" value="SERINE PROTEASE INHIBITOR"/>
    <property type="match status" value="1"/>
</dbReference>
<dbReference type="PANTHER" id="PTHR21312:SF30">
    <property type="entry name" value="SERINE PROTEASE INHIBITOR KAZAL-TYPE 11-RELATED"/>
    <property type="match status" value="1"/>
</dbReference>
<dbReference type="Pfam" id="PF00050">
    <property type="entry name" value="Kazal_1"/>
    <property type="match status" value="1"/>
</dbReference>
<dbReference type="SUPFAM" id="SSF100895">
    <property type="entry name" value="Kazal-type serine protease inhibitors"/>
    <property type="match status" value="1"/>
</dbReference>
<dbReference type="PROSITE" id="PS00282">
    <property type="entry name" value="KAZAL_1"/>
    <property type="match status" value="1"/>
</dbReference>
<dbReference type="PROSITE" id="PS51465">
    <property type="entry name" value="KAZAL_2"/>
    <property type="match status" value="1"/>
</dbReference>
<reference key="1">
    <citation type="journal article" date="2006" name="Biochem. Biophys. Res. Commun.">
        <title>Novel epididymal protease inhibitors with Kazal or WAP family domain.</title>
        <authorList>
            <person name="Jalkanen J."/>
            <person name="Kotimaeki M."/>
            <person name="Huhtaniemi I."/>
            <person name="Poutanen M."/>
        </authorList>
    </citation>
    <scope>NUCLEOTIDE SEQUENCE [MRNA]</scope>
    <scope>TISSUE SPECIFICITY</scope>
    <source>
        <strain>FVB/N</strain>
        <tissue>Epididymis</tissue>
    </source>
</reference>
<reference key="2">
    <citation type="journal article" date="2005" name="Science">
        <title>The transcriptional landscape of the mammalian genome.</title>
        <authorList>
            <person name="Carninci P."/>
            <person name="Kasukawa T."/>
            <person name="Katayama S."/>
            <person name="Gough J."/>
            <person name="Frith M.C."/>
            <person name="Maeda N."/>
            <person name="Oyama R."/>
            <person name="Ravasi T."/>
            <person name="Lenhard B."/>
            <person name="Wells C."/>
            <person name="Kodzius R."/>
            <person name="Shimokawa K."/>
            <person name="Bajic V.B."/>
            <person name="Brenner S.E."/>
            <person name="Batalov S."/>
            <person name="Forrest A.R."/>
            <person name="Zavolan M."/>
            <person name="Davis M.J."/>
            <person name="Wilming L.G."/>
            <person name="Aidinis V."/>
            <person name="Allen J.E."/>
            <person name="Ambesi-Impiombato A."/>
            <person name="Apweiler R."/>
            <person name="Aturaliya R.N."/>
            <person name="Bailey T.L."/>
            <person name="Bansal M."/>
            <person name="Baxter L."/>
            <person name="Beisel K.W."/>
            <person name="Bersano T."/>
            <person name="Bono H."/>
            <person name="Chalk A.M."/>
            <person name="Chiu K.P."/>
            <person name="Choudhary V."/>
            <person name="Christoffels A."/>
            <person name="Clutterbuck D.R."/>
            <person name="Crowe M.L."/>
            <person name="Dalla E."/>
            <person name="Dalrymple B.P."/>
            <person name="de Bono B."/>
            <person name="Della Gatta G."/>
            <person name="di Bernardo D."/>
            <person name="Down T."/>
            <person name="Engstrom P."/>
            <person name="Fagiolini M."/>
            <person name="Faulkner G."/>
            <person name="Fletcher C.F."/>
            <person name="Fukushima T."/>
            <person name="Furuno M."/>
            <person name="Futaki S."/>
            <person name="Gariboldi M."/>
            <person name="Georgii-Hemming P."/>
            <person name="Gingeras T.R."/>
            <person name="Gojobori T."/>
            <person name="Green R.E."/>
            <person name="Gustincich S."/>
            <person name="Harbers M."/>
            <person name="Hayashi Y."/>
            <person name="Hensch T.K."/>
            <person name="Hirokawa N."/>
            <person name="Hill D."/>
            <person name="Huminiecki L."/>
            <person name="Iacono M."/>
            <person name="Ikeo K."/>
            <person name="Iwama A."/>
            <person name="Ishikawa T."/>
            <person name="Jakt M."/>
            <person name="Kanapin A."/>
            <person name="Katoh M."/>
            <person name="Kawasawa Y."/>
            <person name="Kelso J."/>
            <person name="Kitamura H."/>
            <person name="Kitano H."/>
            <person name="Kollias G."/>
            <person name="Krishnan S.P."/>
            <person name="Kruger A."/>
            <person name="Kummerfeld S.K."/>
            <person name="Kurochkin I.V."/>
            <person name="Lareau L.F."/>
            <person name="Lazarevic D."/>
            <person name="Lipovich L."/>
            <person name="Liu J."/>
            <person name="Liuni S."/>
            <person name="McWilliam S."/>
            <person name="Madan Babu M."/>
            <person name="Madera M."/>
            <person name="Marchionni L."/>
            <person name="Matsuda H."/>
            <person name="Matsuzawa S."/>
            <person name="Miki H."/>
            <person name="Mignone F."/>
            <person name="Miyake S."/>
            <person name="Morris K."/>
            <person name="Mottagui-Tabar S."/>
            <person name="Mulder N."/>
            <person name="Nakano N."/>
            <person name="Nakauchi H."/>
            <person name="Ng P."/>
            <person name="Nilsson R."/>
            <person name="Nishiguchi S."/>
            <person name="Nishikawa S."/>
            <person name="Nori F."/>
            <person name="Ohara O."/>
            <person name="Okazaki Y."/>
            <person name="Orlando V."/>
            <person name="Pang K.C."/>
            <person name="Pavan W.J."/>
            <person name="Pavesi G."/>
            <person name="Pesole G."/>
            <person name="Petrovsky N."/>
            <person name="Piazza S."/>
            <person name="Reed J."/>
            <person name="Reid J.F."/>
            <person name="Ring B.Z."/>
            <person name="Ringwald M."/>
            <person name="Rost B."/>
            <person name="Ruan Y."/>
            <person name="Salzberg S.L."/>
            <person name="Sandelin A."/>
            <person name="Schneider C."/>
            <person name="Schoenbach C."/>
            <person name="Sekiguchi K."/>
            <person name="Semple C.A."/>
            <person name="Seno S."/>
            <person name="Sessa L."/>
            <person name="Sheng Y."/>
            <person name="Shibata Y."/>
            <person name="Shimada H."/>
            <person name="Shimada K."/>
            <person name="Silva D."/>
            <person name="Sinclair B."/>
            <person name="Sperling S."/>
            <person name="Stupka E."/>
            <person name="Sugiura K."/>
            <person name="Sultana R."/>
            <person name="Takenaka Y."/>
            <person name="Taki K."/>
            <person name="Tammoja K."/>
            <person name="Tan S.L."/>
            <person name="Tang S."/>
            <person name="Taylor M.S."/>
            <person name="Tegner J."/>
            <person name="Teichmann S.A."/>
            <person name="Ueda H.R."/>
            <person name="van Nimwegen E."/>
            <person name="Verardo R."/>
            <person name="Wei C.L."/>
            <person name="Yagi K."/>
            <person name="Yamanishi H."/>
            <person name="Zabarovsky E."/>
            <person name="Zhu S."/>
            <person name="Zimmer A."/>
            <person name="Hide W."/>
            <person name="Bult C."/>
            <person name="Grimmond S.M."/>
            <person name="Teasdale R.D."/>
            <person name="Liu E.T."/>
            <person name="Brusic V."/>
            <person name="Quackenbush J."/>
            <person name="Wahlestedt C."/>
            <person name="Mattick J.S."/>
            <person name="Hume D.A."/>
            <person name="Kai C."/>
            <person name="Sasaki D."/>
            <person name="Tomaru Y."/>
            <person name="Fukuda S."/>
            <person name="Kanamori-Katayama M."/>
            <person name="Suzuki M."/>
            <person name="Aoki J."/>
            <person name="Arakawa T."/>
            <person name="Iida J."/>
            <person name="Imamura K."/>
            <person name="Itoh M."/>
            <person name="Kato T."/>
            <person name="Kawaji H."/>
            <person name="Kawagashira N."/>
            <person name="Kawashima T."/>
            <person name="Kojima M."/>
            <person name="Kondo S."/>
            <person name="Konno H."/>
            <person name="Nakano K."/>
            <person name="Ninomiya N."/>
            <person name="Nishio T."/>
            <person name="Okada M."/>
            <person name="Plessy C."/>
            <person name="Shibata K."/>
            <person name="Shiraki T."/>
            <person name="Suzuki S."/>
            <person name="Tagami M."/>
            <person name="Waki K."/>
            <person name="Watahiki A."/>
            <person name="Okamura-Oho Y."/>
            <person name="Suzuki H."/>
            <person name="Kawai J."/>
            <person name="Hayashizaki Y."/>
        </authorList>
    </citation>
    <scope>NUCLEOTIDE SEQUENCE [LARGE SCALE MRNA]</scope>
    <source>
        <strain>C57BL/6J</strain>
        <tissue>Epididymis</tissue>
    </source>
</reference>
<reference key="3">
    <citation type="journal article" date="2004" name="Genome Res.">
        <title>The status, quality, and expansion of the NIH full-length cDNA project: the Mammalian Gene Collection (MGC).</title>
        <authorList>
            <consortium name="The MGC Project Team"/>
        </authorList>
    </citation>
    <scope>NUCLEOTIDE SEQUENCE [LARGE SCALE MRNA]</scope>
    <source>
        <tissue>Testis</tissue>
    </source>
</reference>
<evidence type="ECO:0000255" key="1"/>
<evidence type="ECO:0000255" key="2">
    <source>
        <dbReference type="PROSITE-ProRule" id="PRU00798"/>
    </source>
</evidence>
<evidence type="ECO:0000269" key="3">
    <source>
    </source>
</evidence>
<evidence type="ECO:0000305" key="4"/>
<name>ISK11_MOUSE</name>
<keyword id="KW-1015">Disulfide bond</keyword>
<keyword id="KW-0325">Glycoprotein</keyword>
<keyword id="KW-0646">Protease inhibitor</keyword>
<keyword id="KW-1185">Reference proteome</keyword>
<keyword id="KW-0964">Secreted</keyword>
<keyword id="KW-0722">Serine protease inhibitor</keyword>
<keyword id="KW-0732">Signal</keyword>
<accession>Q09TK7</accession>
<accession>B9EJS7</accession>
<accession>Q3UW03</accession>
<gene>
    <name type="primary">Spink11</name>
</gene>
<comment type="function">
    <text>Probable serine protease inhibitor.</text>
</comment>
<comment type="subcellular location">
    <subcellularLocation>
        <location evidence="4">Secreted</location>
    </subcellularLocation>
</comment>
<comment type="tissue specificity">
    <text evidence="3">Expressed in epydiymis, in the caput. Also expressed in seminal vesicles.</text>
</comment>
<comment type="sequence caution" evidence="4">
    <conflict type="erroneous initiation">
        <sequence resource="EMBL-CDS" id="ABD93326"/>
    </conflict>
</comment>
<proteinExistence type="evidence at transcript level"/>